<keyword id="KW-0963">Cytoplasm</keyword>
<keyword id="KW-0312">Gluconeogenesis</keyword>
<keyword id="KW-0324">Glycolysis</keyword>
<keyword id="KW-0413">Isomerase</keyword>
<protein>
    <recommendedName>
        <fullName evidence="1">Triosephosphate isomerase</fullName>
        <shortName evidence="1">TIM</shortName>
        <shortName evidence="1">TPI</shortName>
        <ecNumber evidence="1">5.3.1.1</ecNumber>
    </recommendedName>
    <alternativeName>
        <fullName evidence="1">Triose-phosphate isomerase</fullName>
    </alternativeName>
</protein>
<sequence>MSGSTITPWVVGNWKMNPMRANANQLIEEFKQLLQQNQIADENCHVGVAPVSIALTTVQAQLQDAARTVYTVAQDVSRVAGTGAYTGEVSAELLKDSQINFVLVGHSERRDIFGDNVEILKAKLQNALNAGMTVIYCVGESLEQREQGQAEQVVLQQICDIAPVVTAEQWQNQVVIAYEPIWAIGTGKTASPQDAQAMHAKIREGLCQLTPAGSNIAILYGGSVKAENAVELAACPDINGALVGGASLNAASFYQIVQAFAQSK</sequence>
<evidence type="ECO:0000255" key="1">
    <source>
        <dbReference type="HAMAP-Rule" id="MF_00147"/>
    </source>
</evidence>
<reference key="1">
    <citation type="journal article" date="2007" name="Genes Dev.">
        <title>New insights into Acinetobacter baumannii pathogenesis revealed by high-density pyrosequencing and transposon mutagenesis.</title>
        <authorList>
            <person name="Smith M.G."/>
            <person name="Gianoulis T.A."/>
            <person name="Pukatzki S."/>
            <person name="Mekalanos J.J."/>
            <person name="Ornston L.N."/>
            <person name="Gerstein M."/>
            <person name="Snyder M."/>
        </authorList>
    </citation>
    <scope>NUCLEOTIDE SEQUENCE [LARGE SCALE GENOMIC DNA]</scope>
    <source>
        <strain>ATCC 17978 / DSM 105126 / CIP 53.77 / LMG 1025 / NCDC KC755 / 5377</strain>
    </source>
</reference>
<proteinExistence type="inferred from homology"/>
<feature type="chain" id="PRO_1000096469" description="Triosephosphate isomerase">
    <location>
        <begin position="1"/>
        <end position="264"/>
    </location>
</feature>
<feature type="active site" description="Electrophile" evidence="1">
    <location>
        <position position="106"/>
    </location>
</feature>
<feature type="active site" description="Proton acceptor" evidence="1">
    <location>
        <position position="179"/>
    </location>
</feature>
<feature type="binding site" evidence="1">
    <location>
        <begin position="13"/>
        <end position="15"/>
    </location>
    <ligand>
        <name>substrate</name>
    </ligand>
</feature>
<feature type="binding site" evidence="1">
    <location>
        <position position="185"/>
    </location>
    <ligand>
        <name>substrate</name>
    </ligand>
</feature>
<feature type="binding site" evidence="1">
    <location>
        <position position="223"/>
    </location>
    <ligand>
        <name>substrate</name>
    </ligand>
</feature>
<feature type="binding site" evidence="1">
    <location>
        <begin position="244"/>
        <end position="245"/>
    </location>
    <ligand>
        <name>substrate</name>
    </ligand>
</feature>
<organism>
    <name type="scientific">Acinetobacter baumannii (strain ATCC 17978 / DSM 105126 / CIP 53.77 / LMG 1025 / NCDC KC755 / 5377)</name>
    <dbReference type="NCBI Taxonomy" id="400667"/>
    <lineage>
        <taxon>Bacteria</taxon>
        <taxon>Pseudomonadati</taxon>
        <taxon>Pseudomonadota</taxon>
        <taxon>Gammaproteobacteria</taxon>
        <taxon>Moraxellales</taxon>
        <taxon>Moraxellaceae</taxon>
        <taxon>Acinetobacter</taxon>
        <taxon>Acinetobacter calcoaceticus/baumannii complex</taxon>
    </lineage>
</organism>
<gene>
    <name evidence="1" type="primary">tpiA</name>
    <name type="ordered locus">A1S_0330</name>
</gene>
<name>TPIS_ACIBT</name>
<dbReference type="EC" id="5.3.1.1" evidence="1"/>
<dbReference type="EMBL" id="CP000521">
    <property type="protein sequence ID" value="ABO10794.2"/>
    <property type="molecule type" value="Genomic_DNA"/>
</dbReference>
<dbReference type="RefSeq" id="WP_000016939.1">
    <property type="nucleotide sequence ID" value="NZ_CP053098.1"/>
</dbReference>
<dbReference type="SMR" id="A3M1K0"/>
<dbReference type="KEGG" id="acb:A1S_0330"/>
<dbReference type="HOGENOM" id="CLU_024251_2_1_6"/>
<dbReference type="UniPathway" id="UPA00109">
    <property type="reaction ID" value="UER00189"/>
</dbReference>
<dbReference type="UniPathway" id="UPA00138"/>
<dbReference type="GO" id="GO:0005829">
    <property type="term" value="C:cytosol"/>
    <property type="evidence" value="ECO:0007669"/>
    <property type="project" value="TreeGrafter"/>
</dbReference>
<dbReference type="GO" id="GO:0004807">
    <property type="term" value="F:triose-phosphate isomerase activity"/>
    <property type="evidence" value="ECO:0007669"/>
    <property type="project" value="UniProtKB-UniRule"/>
</dbReference>
<dbReference type="GO" id="GO:0006094">
    <property type="term" value="P:gluconeogenesis"/>
    <property type="evidence" value="ECO:0007669"/>
    <property type="project" value="UniProtKB-UniRule"/>
</dbReference>
<dbReference type="GO" id="GO:0046166">
    <property type="term" value="P:glyceraldehyde-3-phosphate biosynthetic process"/>
    <property type="evidence" value="ECO:0007669"/>
    <property type="project" value="TreeGrafter"/>
</dbReference>
<dbReference type="GO" id="GO:0019563">
    <property type="term" value="P:glycerol catabolic process"/>
    <property type="evidence" value="ECO:0007669"/>
    <property type="project" value="TreeGrafter"/>
</dbReference>
<dbReference type="GO" id="GO:0006096">
    <property type="term" value="P:glycolytic process"/>
    <property type="evidence" value="ECO:0007669"/>
    <property type="project" value="UniProtKB-UniRule"/>
</dbReference>
<dbReference type="CDD" id="cd00311">
    <property type="entry name" value="TIM"/>
    <property type="match status" value="1"/>
</dbReference>
<dbReference type="FunFam" id="3.20.20.70:FF:000016">
    <property type="entry name" value="Triosephosphate isomerase"/>
    <property type="match status" value="1"/>
</dbReference>
<dbReference type="Gene3D" id="3.20.20.70">
    <property type="entry name" value="Aldolase class I"/>
    <property type="match status" value="1"/>
</dbReference>
<dbReference type="HAMAP" id="MF_00147_B">
    <property type="entry name" value="TIM_B"/>
    <property type="match status" value="1"/>
</dbReference>
<dbReference type="InterPro" id="IPR013785">
    <property type="entry name" value="Aldolase_TIM"/>
</dbReference>
<dbReference type="InterPro" id="IPR035990">
    <property type="entry name" value="TIM_sf"/>
</dbReference>
<dbReference type="InterPro" id="IPR022896">
    <property type="entry name" value="TrioseP_Isoase_bac/euk"/>
</dbReference>
<dbReference type="InterPro" id="IPR000652">
    <property type="entry name" value="Triosephosphate_isomerase"/>
</dbReference>
<dbReference type="InterPro" id="IPR020861">
    <property type="entry name" value="Triosephosphate_isomerase_AS"/>
</dbReference>
<dbReference type="NCBIfam" id="TIGR00419">
    <property type="entry name" value="tim"/>
    <property type="match status" value="1"/>
</dbReference>
<dbReference type="PANTHER" id="PTHR21139">
    <property type="entry name" value="TRIOSEPHOSPHATE ISOMERASE"/>
    <property type="match status" value="1"/>
</dbReference>
<dbReference type="PANTHER" id="PTHR21139:SF42">
    <property type="entry name" value="TRIOSEPHOSPHATE ISOMERASE"/>
    <property type="match status" value="1"/>
</dbReference>
<dbReference type="Pfam" id="PF00121">
    <property type="entry name" value="TIM"/>
    <property type="match status" value="1"/>
</dbReference>
<dbReference type="SUPFAM" id="SSF51351">
    <property type="entry name" value="Triosephosphate isomerase (TIM)"/>
    <property type="match status" value="1"/>
</dbReference>
<dbReference type="PROSITE" id="PS00171">
    <property type="entry name" value="TIM_1"/>
    <property type="match status" value="1"/>
</dbReference>
<dbReference type="PROSITE" id="PS51440">
    <property type="entry name" value="TIM_2"/>
    <property type="match status" value="1"/>
</dbReference>
<comment type="function">
    <text evidence="1">Involved in the gluconeogenesis. Catalyzes stereospecifically the conversion of dihydroxyacetone phosphate (DHAP) to D-glyceraldehyde-3-phosphate (G3P).</text>
</comment>
<comment type="catalytic activity">
    <reaction evidence="1">
        <text>D-glyceraldehyde 3-phosphate = dihydroxyacetone phosphate</text>
        <dbReference type="Rhea" id="RHEA:18585"/>
        <dbReference type="ChEBI" id="CHEBI:57642"/>
        <dbReference type="ChEBI" id="CHEBI:59776"/>
        <dbReference type="EC" id="5.3.1.1"/>
    </reaction>
</comment>
<comment type="pathway">
    <text evidence="1">Carbohydrate biosynthesis; gluconeogenesis.</text>
</comment>
<comment type="pathway">
    <text evidence="1">Carbohydrate degradation; glycolysis; D-glyceraldehyde 3-phosphate from glycerone phosphate: step 1/1.</text>
</comment>
<comment type="subunit">
    <text evidence="1">Homodimer.</text>
</comment>
<comment type="subcellular location">
    <subcellularLocation>
        <location evidence="1">Cytoplasm</location>
    </subcellularLocation>
</comment>
<comment type="similarity">
    <text evidence="1">Belongs to the triosephosphate isomerase family.</text>
</comment>
<accession>A3M1K0</accession>